<organism>
    <name type="scientific">Burkholderia ambifaria (strain ATCC BAA-244 / DSM 16087 / CCUG 44356 / LMG 19182 / AMMD)</name>
    <name type="common">Burkholderia cepacia (strain AMMD)</name>
    <dbReference type="NCBI Taxonomy" id="339670"/>
    <lineage>
        <taxon>Bacteria</taxon>
        <taxon>Pseudomonadati</taxon>
        <taxon>Pseudomonadota</taxon>
        <taxon>Betaproteobacteria</taxon>
        <taxon>Burkholderiales</taxon>
        <taxon>Burkholderiaceae</taxon>
        <taxon>Burkholderia</taxon>
        <taxon>Burkholderia cepacia complex</taxon>
    </lineage>
</organism>
<proteinExistence type="inferred from homology"/>
<evidence type="ECO:0000255" key="1">
    <source>
        <dbReference type="HAMAP-Rule" id="MF_01690"/>
    </source>
</evidence>
<accession>Q0BE03</accession>
<protein>
    <recommendedName>
        <fullName evidence="1">Succinyl-diaminopimelate desuccinylase</fullName>
        <shortName evidence="1">SDAP desuccinylase</shortName>
        <ecNumber evidence="1">3.5.1.18</ecNumber>
    </recommendedName>
    <alternativeName>
        <fullName evidence="1">N-succinyl-LL-2,6-diaminoheptanedioate amidohydrolase</fullName>
    </alternativeName>
</protein>
<gene>
    <name evidence="1" type="primary">dapE</name>
    <name type="ordered locus">Bamb_2064</name>
</gene>
<name>DAPE_BURCM</name>
<dbReference type="EC" id="3.5.1.18" evidence="1"/>
<dbReference type="EMBL" id="CP000440">
    <property type="protein sequence ID" value="ABI87620.1"/>
    <property type="molecule type" value="Genomic_DNA"/>
</dbReference>
<dbReference type="RefSeq" id="WP_011657295.1">
    <property type="nucleotide sequence ID" value="NC_008390.1"/>
</dbReference>
<dbReference type="SMR" id="Q0BE03"/>
<dbReference type="GeneID" id="93085738"/>
<dbReference type="KEGG" id="bam:Bamb_2064"/>
<dbReference type="PATRIC" id="fig|339670.21.peg.2878"/>
<dbReference type="eggNOG" id="COG0624">
    <property type="taxonomic scope" value="Bacteria"/>
</dbReference>
<dbReference type="UniPathway" id="UPA00034">
    <property type="reaction ID" value="UER00021"/>
</dbReference>
<dbReference type="Proteomes" id="UP000000662">
    <property type="component" value="Chromosome 1"/>
</dbReference>
<dbReference type="GO" id="GO:0008777">
    <property type="term" value="F:acetylornithine deacetylase activity"/>
    <property type="evidence" value="ECO:0007669"/>
    <property type="project" value="TreeGrafter"/>
</dbReference>
<dbReference type="GO" id="GO:0050897">
    <property type="term" value="F:cobalt ion binding"/>
    <property type="evidence" value="ECO:0007669"/>
    <property type="project" value="UniProtKB-UniRule"/>
</dbReference>
<dbReference type="GO" id="GO:0009014">
    <property type="term" value="F:succinyl-diaminopimelate desuccinylase activity"/>
    <property type="evidence" value="ECO:0007669"/>
    <property type="project" value="UniProtKB-UniRule"/>
</dbReference>
<dbReference type="GO" id="GO:0008270">
    <property type="term" value="F:zinc ion binding"/>
    <property type="evidence" value="ECO:0007669"/>
    <property type="project" value="UniProtKB-UniRule"/>
</dbReference>
<dbReference type="GO" id="GO:0019877">
    <property type="term" value="P:diaminopimelate biosynthetic process"/>
    <property type="evidence" value="ECO:0007669"/>
    <property type="project" value="UniProtKB-UniRule"/>
</dbReference>
<dbReference type="GO" id="GO:0006526">
    <property type="term" value="P:L-arginine biosynthetic process"/>
    <property type="evidence" value="ECO:0007669"/>
    <property type="project" value="TreeGrafter"/>
</dbReference>
<dbReference type="GO" id="GO:0009089">
    <property type="term" value="P:lysine biosynthetic process via diaminopimelate"/>
    <property type="evidence" value="ECO:0007669"/>
    <property type="project" value="UniProtKB-UniRule"/>
</dbReference>
<dbReference type="CDD" id="cd03891">
    <property type="entry name" value="M20_DapE_proteobac"/>
    <property type="match status" value="1"/>
</dbReference>
<dbReference type="FunFam" id="3.30.70.360:FF:000011">
    <property type="entry name" value="Succinyl-diaminopimelate desuccinylase"/>
    <property type="match status" value="1"/>
</dbReference>
<dbReference type="FunFam" id="3.40.630.10:FF:000005">
    <property type="entry name" value="Succinyl-diaminopimelate desuccinylase"/>
    <property type="match status" value="1"/>
</dbReference>
<dbReference type="Gene3D" id="3.40.630.10">
    <property type="entry name" value="Zn peptidases"/>
    <property type="match status" value="2"/>
</dbReference>
<dbReference type="HAMAP" id="MF_01690">
    <property type="entry name" value="DapE"/>
    <property type="match status" value="1"/>
</dbReference>
<dbReference type="InterPro" id="IPR001261">
    <property type="entry name" value="ArgE/DapE_CS"/>
</dbReference>
<dbReference type="InterPro" id="IPR036264">
    <property type="entry name" value="Bact_exopeptidase_dim_dom"/>
</dbReference>
<dbReference type="InterPro" id="IPR005941">
    <property type="entry name" value="DapE_proteobac"/>
</dbReference>
<dbReference type="InterPro" id="IPR002933">
    <property type="entry name" value="Peptidase_M20"/>
</dbReference>
<dbReference type="InterPro" id="IPR011650">
    <property type="entry name" value="Peptidase_M20_dimer"/>
</dbReference>
<dbReference type="InterPro" id="IPR050072">
    <property type="entry name" value="Peptidase_M20A"/>
</dbReference>
<dbReference type="NCBIfam" id="TIGR01246">
    <property type="entry name" value="dapE_proteo"/>
    <property type="match status" value="1"/>
</dbReference>
<dbReference type="NCBIfam" id="NF009557">
    <property type="entry name" value="PRK13009.1"/>
    <property type="match status" value="1"/>
</dbReference>
<dbReference type="PANTHER" id="PTHR43808">
    <property type="entry name" value="ACETYLORNITHINE DEACETYLASE"/>
    <property type="match status" value="1"/>
</dbReference>
<dbReference type="PANTHER" id="PTHR43808:SF31">
    <property type="entry name" value="N-ACETYL-L-CITRULLINE DEACETYLASE"/>
    <property type="match status" value="1"/>
</dbReference>
<dbReference type="Pfam" id="PF07687">
    <property type="entry name" value="M20_dimer"/>
    <property type="match status" value="1"/>
</dbReference>
<dbReference type="Pfam" id="PF01546">
    <property type="entry name" value="Peptidase_M20"/>
    <property type="match status" value="1"/>
</dbReference>
<dbReference type="SUPFAM" id="SSF55031">
    <property type="entry name" value="Bacterial exopeptidase dimerisation domain"/>
    <property type="match status" value="1"/>
</dbReference>
<dbReference type="SUPFAM" id="SSF53187">
    <property type="entry name" value="Zn-dependent exopeptidases"/>
    <property type="match status" value="1"/>
</dbReference>
<dbReference type="PROSITE" id="PS00758">
    <property type="entry name" value="ARGE_DAPE_CPG2_1"/>
    <property type="match status" value="1"/>
</dbReference>
<sequence length="379" mass="40694">MSATLALTEQLIARASVTPDDQHCQQLMTERLAALGFECETIASHGVTNLWAVKRGADGRDGKLLAFAGHTDVVPTGPLEQWTSPPFVPTHRDGKLYGRGAADMKTSLAAFVVASEEFVAAHPGHRGAIAFLITSDEEGPATDGTVKVVELLETRGERVDYCIVGEPTSSAELGDVVKNGRRGSMSGELVVKGVQGHIAYPHLAKNPIHLLAPALAELAAEQWDAGNEYFPPTTWQVSNLHAGTGATNVIPGHADLMFNFRFSTASTVEGLQARVHAILGKHGLEYTLKWSVSGLPFLTPRGDLSNALENAIRAETGLTTELSTTGGTSDGRFIARICPQVIEFGPPNGSIHKIDEHIDVRFVDPLKNVYRRVLEQLIA</sequence>
<feature type="chain" id="PRO_0000375495" description="Succinyl-diaminopimelate desuccinylase">
    <location>
        <begin position="1"/>
        <end position="379"/>
    </location>
</feature>
<feature type="active site" evidence="1">
    <location>
        <position position="72"/>
    </location>
</feature>
<feature type="active site" description="Proton acceptor" evidence="1">
    <location>
        <position position="137"/>
    </location>
</feature>
<feature type="binding site" evidence="1">
    <location>
        <position position="70"/>
    </location>
    <ligand>
        <name>Zn(2+)</name>
        <dbReference type="ChEBI" id="CHEBI:29105"/>
        <label>1</label>
    </ligand>
</feature>
<feature type="binding site" evidence="1">
    <location>
        <position position="103"/>
    </location>
    <ligand>
        <name>Zn(2+)</name>
        <dbReference type="ChEBI" id="CHEBI:29105"/>
        <label>1</label>
    </ligand>
</feature>
<feature type="binding site" evidence="1">
    <location>
        <position position="103"/>
    </location>
    <ligand>
        <name>Zn(2+)</name>
        <dbReference type="ChEBI" id="CHEBI:29105"/>
        <label>2</label>
    </ligand>
</feature>
<feature type="binding site" evidence="1">
    <location>
        <position position="138"/>
    </location>
    <ligand>
        <name>Zn(2+)</name>
        <dbReference type="ChEBI" id="CHEBI:29105"/>
        <label>2</label>
    </ligand>
</feature>
<feature type="binding site" evidence="1">
    <location>
        <position position="166"/>
    </location>
    <ligand>
        <name>Zn(2+)</name>
        <dbReference type="ChEBI" id="CHEBI:29105"/>
        <label>1</label>
    </ligand>
</feature>
<feature type="binding site" evidence="1">
    <location>
        <position position="352"/>
    </location>
    <ligand>
        <name>Zn(2+)</name>
        <dbReference type="ChEBI" id="CHEBI:29105"/>
        <label>2</label>
    </ligand>
</feature>
<keyword id="KW-0028">Amino-acid biosynthesis</keyword>
<keyword id="KW-0170">Cobalt</keyword>
<keyword id="KW-0220">Diaminopimelate biosynthesis</keyword>
<keyword id="KW-0378">Hydrolase</keyword>
<keyword id="KW-0457">Lysine biosynthesis</keyword>
<keyword id="KW-0479">Metal-binding</keyword>
<keyword id="KW-0862">Zinc</keyword>
<reference key="1">
    <citation type="submission" date="2006-08" db="EMBL/GenBank/DDBJ databases">
        <title>Complete sequence of chromosome 1 of Burkholderia cepacia AMMD.</title>
        <authorList>
            <person name="Copeland A."/>
            <person name="Lucas S."/>
            <person name="Lapidus A."/>
            <person name="Barry K."/>
            <person name="Detter J.C."/>
            <person name="Glavina del Rio T."/>
            <person name="Hammon N."/>
            <person name="Israni S."/>
            <person name="Pitluck S."/>
            <person name="Bruce D."/>
            <person name="Chain P."/>
            <person name="Malfatti S."/>
            <person name="Shin M."/>
            <person name="Vergez L."/>
            <person name="Schmutz J."/>
            <person name="Larimer F."/>
            <person name="Land M."/>
            <person name="Hauser L."/>
            <person name="Kyrpides N."/>
            <person name="Kim E."/>
            <person name="Parke J."/>
            <person name="Coenye T."/>
            <person name="Konstantinidis K."/>
            <person name="Ramette A."/>
            <person name="Tiedje J."/>
            <person name="Richardson P."/>
        </authorList>
    </citation>
    <scope>NUCLEOTIDE SEQUENCE [LARGE SCALE GENOMIC DNA]</scope>
    <source>
        <strain>ATCC BAA-244 / DSM 16087 / CCUG 44356 / LMG 19182 / AMMD</strain>
    </source>
</reference>
<comment type="function">
    <text evidence="1">Catalyzes the hydrolysis of N-succinyl-L,L-diaminopimelic acid (SDAP), forming succinate and LL-2,6-diaminopimelate (DAP), an intermediate involved in the bacterial biosynthesis of lysine and meso-diaminopimelic acid, an essential component of bacterial cell walls.</text>
</comment>
<comment type="catalytic activity">
    <reaction evidence="1">
        <text>N-succinyl-(2S,6S)-2,6-diaminopimelate + H2O = (2S,6S)-2,6-diaminopimelate + succinate</text>
        <dbReference type="Rhea" id="RHEA:22608"/>
        <dbReference type="ChEBI" id="CHEBI:15377"/>
        <dbReference type="ChEBI" id="CHEBI:30031"/>
        <dbReference type="ChEBI" id="CHEBI:57609"/>
        <dbReference type="ChEBI" id="CHEBI:58087"/>
        <dbReference type="EC" id="3.5.1.18"/>
    </reaction>
</comment>
<comment type="cofactor">
    <cofactor evidence="1">
        <name>Zn(2+)</name>
        <dbReference type="ChEBI" id="CHEBI:29105"/>
    </cofactor>
    <cofactor evidence="1">
        <name>Co(2+)</name>
        <dbReference type="ChEBI" id="CHEBI:48828"/>
    </cofactor>
    <text evidence="1">Binds 2 Zn(2+) or Co(2+) ions per subunit.</text>
</comment>
<comment type="pathway">
    <text evidence="1">Amino-acid biosynthesis; L-lysine biosynthesis via DAP pathway; LL-2,6-diaminopimelate from (S)-tetrahydrodipicolinate (succinylase route): step 3/3.</text>
</comment>
<comment type="subunit">
    <text evidence="1">Homodimer.</text>
</comment>
<comment type="similarity">
    <text evidence="1">Belongs to the peptidase M20A family. DapE subfamily.</text>
</comment>